<sequence>MSRRNRNNYLSIAAVRTIGLDFIEMLEETNRRSISDRNTLTDIYNTEFRDRDGGVKDPNFSRVLYALRNANKARLSRTGRVYFNTNVRTGLHDQWFRPRRRQQNQANATPGNVSSVTPSSDQGPSCPESGVRARRKLVKYILQRLNTTDRSHFIADKWGVRVSSELYIEDGKIRISVDEAEVYELKLFVENTGQEAVYFTYYTALCWLQYFTLEDSRKVTRNNPLRLEPREKYEVIVRFKSSHVGVYSATLAFEFKKNTQPTTRSFHIVRFIEAEYRSKLAALLGPTEPYKPLRLNISEPENCIIDEGFPPDGYLQNFLVNVLPLGKYIPPPDTTILAELLKEDCSSRIFRGKLKDLQSLLQSPLTFDNYAERFDLLLYLEECQMHVDIKRYNKDSVTLHRDRDKRLMGLNLPGVSENRPSVLRGDHLLLTKSEEVTFSNVTKYKGYVHRVELDQVKLGLSKRFLKDVYIDKMKFRVEFTVNRIPVRLQHRAVHMAVQHNLKDVLFPMASRSLNPVSPPALRLFDRKLEYNFQQYSAVCNIVAGTSKPAPYLVFGPPGTGKTVTIVEAIKQVEKNIPDAYILACAPSNSAADQLCEKLITSEHVDAHKIYRLYASSRNQKDIPKILKDNCNVDEEMIDFPCKEDLMSYKILICTLVTAGRLVTGGFSEDHFTHNFVDEAGHAVESETIISVAGLLNAEKGQLVLAGDPKQLGPILRSPLAINHGLDVSLLERLMTQNDLYKRGDVEFDNRYVSKLIMNYRSHPYILEVPNRLFYDGELKACADEISSNQYCMWEHLPSKGFPVIFHGVPGKDERESNSPSFFNIYEINILVDYLKKLLLTQPKKGISRIFPKDIGIIAPYRKQVEKIKRAIDADKDFQDYMGIDNLKVGSVEEFQGQERKVIMVSTVRSSVKYISLDETFNIGFLKNEKRFNVAVTRAKSLLIMVGNPMILRTDESWGRFIDFCLERGGYTGISITSVERIDDVESRLLALNIQDEETEESPVQRYVDPEFRNDY</sequence>
<gene>
    <name type="primary">mov10b.2</name>
    <name type="ORF">si:dkeyp-38g6.3</name>
</gene>
<reference key="1">
    <citation type="journal article" date="2013" name="Nature">
        <title>The zebrafish reference genome sequence and its relationship to the human genome.</title>
        <authorList>
            <person name="Howe K."/>
            <person name="Clark M.D."/>
            <person name="Torroja C.F."/>
            <person name="Torrance J."/>
            <person name="Berthelot C."/>
            <person name="Muffato M."/>
            <person name="Collins J.E."/>
            <person name="Humphray S."/>
            <person name="McLaren K."/>
            <person name="Matthews L."/>
            <person name="McLaren S."/>
            <person name="Sealy I."/>
            <person name="Caccamo M."/>
            <person name="Churcher C."/>
            <person name="Scott C."/>
            <person name="Barrett J.C."/>
            <person name="Koch R."/>
            <person name="Rauch G.J."/>
            <person name="White S."/>
            <person name="Chow W."/>
            <person name="Kilian B."/>
            <person name="Quintais L.T."/>
            <person name="Guerra-Assuncao J.A."/>
            <person name="Zhou Y."/>
            <person name="Gu Y."/>
            <person name="Yen J."/>
            <person name="Vogel J.H."/>
            <person name="Eyre T."/>
            <person name="Redmond S."/>
            <person name="Banerjee R."/>
            <person name="Chi J."/>
            <person name="Fu B."/>
            <person name="Langley E."/>
            <person name="Maguire S.F."/>
            <person name="Laird G.K."/>
            <person name="Lloyd D."/>
            <person name="Kenyon E."/>
            <person name="Donaldson S."/>
            <person name="Sehra H."/>
            <person name="Almeida-King J."/>
            <person name="Loveland J."/>
            <person name="Trevanion S."/>
            <person name="Jones M."/>
            <person name="Quail M."/>
            <person name="Willey D."/>
            <person name="Hunt A."/>
            <person name="Burton J."/>
            <person name="Sims S."/>
            <person name="McLay K."/>
            <person name="Plumb B."/>
            <person name="Davis J."/>
            <person name="Clee C."/>
            <person name="Oliver K."/>
            <person name="Clark R."/>
            <person name="Riddle C."/>
            <person name="Elliot D."/>
            <person name="Threadgold G."/>
            <person name="Harden G."/>
            <person name="Ware D."/>
            <person name="Begum S."/>
            <person name="Mortimore B."/>
            <person name="Kerry G."/>
            <person name="Heath P."/>
            <person name="Phillimore B."/>
            <person name="Tracey A."/>
            <person name="Corby N."/>
            <person name="Dunn M."/>
            <person name="Johnson C."/>
            <person name="Wood J."/>
            <person name="Clark S."/>
            <person name="Pelan S."/>
            <person name="Griffiths G."/>
            <person name="Smith M."/>
            <person name="Glithero R."/>
            <person name="Howden P."/>
            <person name="Barker N."/>
            <person name="Lloyd C."/>
            <person name="Stevens C."/>
            <person name="Harley J."/>
            <person name="Holt K."/>
            <person name="Panagiotidis G."/>
            <person name="Lovell J."/>
            <person name="Beasley H."/>
            <person name="Henderson C."/>
            <person name="Gordon D."/>
            <person name="Auger K."/>
            <person name="Wright D."/>
            <person name="Collins J."/>
            <person name="Raisen C."/>
            <person name="Dyer L."/>
            <person name="Leung K."/>
            <person name="Robertson L."/>
            <person name="Ambridge K."/>
            <person name="Leongamornlert D."/>
            <person name="McGuire S."/>
            <person name="Gilderthorp R."/>
            <person name="Griffiths C."/>
            <person name="Manthravadi D."/>
            <person name="Nichol S."/>
            <person name="Barker G."/>
            <person name="Whitehead S."/>
            <person name="Kay M."/>
            <person name="Brown J."/>
            <person name="Murnane C."/>
            <person name="Gray E."/>
            <person name="Humphries M."/>
            <person name="Sycamore N."/>
            <person name="Barker D."/>
            <person name="Saunders D."/>
            <person name="Wallis J."/>
            <person name="Babbage A."/>
            <person name="Hammond S."/>
            <person name="Mashreghi-Mohammadi M."/>
            <person name="Barr L."/>
            <person name="Martin S."/>
            <person name="Wray P."/>
            <person name="Ellington A."/>
            <person name="Matthews N."/>
            <person name="Ellwood M."/>
            <person name="Woodmansey R."/>
            <person name="Clark G."/>
            <person name="Cooper J."/>
            <person name="Tromans A."/>
            <person name="Grafham D."/>
            <person name="Skuce C."/>
            <person name="Pandian R."/>
            <person name="Andrews R."/>
            <person name="Harrison E."/>
            <person name="Kimberley A."/>
            <person name="Garnett J."/>
            <person name="Fosker N."/>
            <person name="Hall R."/>
            <person name="Garner P."/>
            <person name="Kelly D."/>
            <person name="Bird C."/>
            <person name="Palmer S."/>
            <person name="Gehring I."/>
            <person name="Berger A."/>
            <person name="Dooley C.M."/>
            <person name="Ersan-Urun Z."/>
            <person name="Eser C."/>
            <person name="Geiger H."/>
            <person name="Geisler M."/>
            <person name="Karotki L."/>
            <person name="Kirn A."/>
            <person name="Konantz J."/>
            <person name="Konantz M."/>
            <person name="Oberlander M."/>
            <person name="Rudolph-Geiger S."/>
            <person name="Teucke M."/>
            <person name="Lanz C."/>
            <person name="Raddatz G."/>
            <person name="Osoegawa K."/>
            <person name="Zhu B."/>
            <person name="Rapp A."/>
            <person name="Widaa S."/>
            <person name="Langford C."/>
            <person name="Yang F."/>
            <person name="Schuster S.C."/>
            <person name="Carter N.P."/>
            <person name="Harrow J."/>
            <person name="Ning Z."/>
            <person name="Herrero J."/>
            <person name="Searle S.M."/>
            <person name="Enright A."/>
            <person name="Geisler R."/>
            <person name="Plasterk R.H."/>
            <person name="Lee C."/>
            <person name="Westerfield M."/>
            <person name="de Jong P.J."/>
            <person name="Zon L.I."/>
            <person name="Postlethwait J.H."/>
            <person name="Nusslein-Volhard C."/>
            <person name="Hubbard T.J."/>
            <person name="Roest Crollius H."/>
            <person name="Rogers J."/>
            <person name="Stemple D.L."/>
        </authorList>
    </citation>
    <scope>NUCLEOTIDE SEQUENCE [LARGE SCALE GENOMIC DNA]</scope>
    <source>
        <strain>Tuebingen</strain>
    </source>
</reference>
<organism>
    <name type="scientific">Danio rerio</name>
    <name type="common">Zebrafish</name>
    <name type="synonym">Brachydanio rerio</name>
    <dbReference type="NCBI Taxonomy" id="7955"/>
    <lineage>
        <taxon>Eukaryota</taxon>
        <taxon>Metazoa</taxon>
        <taxon>Chordata</taxon>
        <taxon>Craniata</taxon>
        <taxon>Vertebrata</taxon>
        <taxon>Euteleostomi</taxon>
        <taxon>Actinopterygii</taxon>
        <taxon>Neopterygii</taxon>
        <taxon>Teleostei</taxon>
        <taxon>Ostariophysi</taxon>
        <taxon>Cypriniformes</taxon>
        <taxon>Danionidae</taxon>
        <taxon>Danioninae</taxon>
        <taxon>Danio</taxon>
    </lineage>
</organism>
<evidence type="ECO:0000250" key="1"/>
<evidence type="ECO:0000256" key="2">
    <source>
        <dbReference type="SAM" id="MobiDB-lite"/>
    </source>
</evidence>
<evidence type="ECO:0000305" key="3"/>
<feature type="chain" id="PRO_0000374669" description="Putative helicase mov-10-B.2">
    <location>
        <begin position="1"/>
        <end position="1015"/>
    </location>
</feature>
<feature type="region of interest" description="Disordered" evidence="2">
    <location>
        <begin position="94"/>
        <end position="130"/>
    </location>
</feature>
<feature type="short sequence motif" description="DEAG box">
    <location>
        <begin position="677"/>
        <end position="680"/>
    </location>
</feature>
<feature type="compositionally biased region" description="Polar residues" evidence="2">
    <location>
        <begin position="109"/>
        <end position="123"/>
    </location>
</feature>
<feature type="binding site" evidence="1">
    <location>
        <begin position="555"/>
        <end position="562"/>
    </location>
    <ligand>
        <name>ATP</name>
        <dbReference type="ChEBI" id="CHEBI:30616"/>
    </ligand>
</feature>
<name>M10B2_DANRE</name>
<accession>Q1LXK5</accession>
<comment type="function">
    <text evidence="1">Probable RNA helicase. Required for RNA-mediated gene silencing by the RNA-induced silencing complex (RISC). Required for both miRNA-mediated translational repression and miRNA-mediated cleavage of complementary mRNAs by RISC (By similarity).</text>
</comment>
<comment type="catalytic activity">
    <reaction>
        <text>ATP + H2O = ADP + phosphate + H(+)</text>
        <dbReference type="Rhea" id="RHEA:13065"/>
        <dbReference type="ChEBI" id="CHEBI:15377"/>
        <dbReference type="ChEBI" id="CHEBI:15378"/>
        <dbReference type="ChEBI" id="CHEBI:30616"/>
        <dbReference type="ChEBI" id="CHEBI:43474"/>
        <dbReference type="ChEBI" id="CHEBI:456216"/>
        <dbReference type="EC" id="3.6.4.13"/>
    </reaction>
</comment>
<comment type="subcellular location">
    <subcellularLocation>
        <location evidence="1">Cytoplasm</location>
        <location evidence="1">P-body</location>
    </subcellularLocation>
</comment>
<comment type="similarity">
    <text evidence="3">Belongs to the DNA2/NAM7 helicase family. SDE3 subfamily.</text>
</comment>
<protein>
    <recommendedName>
        <fullName>Putative helicase mov-10-B.2</fullName>
        <ecNumber>3.6.4.13</ecNumber>
    </recommendedName>
</protein>
<keyword id="KW-0067">ATP-binding</keyword>
<keyword id="KW-0963">Cytoplasm</keyword>
<keyword id="KW-0347">Helicase</keyword>
<keyword id="KW-0378">Hydrolase</keyword>
<keyword id="KW-0547">Nucleotide-binding</keyword>
<keyword id="KW-1185">Reference proteome</keyword>
<keyword id="KW-0694">RNA-binding</keyword>
<keyword id="KW-0943">RNA-mediated gene silencing</keyword>
<dbReference type="EC" id="3.6.4.13"/>
<dbReference type="EMBL" id="BX323059">
    <property type="protein sequence ID" value="CAK11381.1"/>
    <property type="molecule type" value="Genomic_DNA"/>
</dbReference>
<dbReference type="RefSeq" id="NP_001037805.1">
    <property type="nucleotide sequence ID" value="NM_001044340.2"/>
</dbReference>
<dbReference type="SMR" id="Q1LXK5"/>
<dbReference type="FunCoup" id="Q1LXK5">
    <property type="interactions" value="710"/>
</dbReference>
<dbReference type="STRING" id="7955.ENSDARP00000072953"/>
<dbReference type="PaxDb" id="7955-ENSDARP00000072953"/>
<dbReference type="Ensembl" id="ENSDART00000078491">
    <property type="protein sequence ID" value="ENSDARP00000072953"/>
    <property type="gene ID" value="ENSDARG00000056065"/>
</dbReference>
<dbReference type="GeneID" id="555950"/>
<dbReference type="KEGG" id="dre:555950"/>
<dbReference type="AGR" id="ZFIN:ZDB-GENE-060526-371"/>
<dbReference type="CTD" id="555950"/>
<dbReference type="ZFIN" id="ZDB-GENE-060526-371">
    <property type="gene designation" value="mov10b.2"/>
</dbReference>
<dbReference type="eggNOG" id="KOG1804">
    <property type="taxonomic scope" value="Eukaryota"/>
</dbReference>
<dbReference type="HOGENOM" id="CLU_001666_6_1_1"/>
<dbReference type="InParanoid" id="Q1LXK5"/>
<dbReference type="OMA" id="CRWEYLP"/>
<dbReference type="OrthoDB" id="6513042at2759"/>
<dbReference type="PhylomeDB" id="Q1LXK5"/>
<dbReference type="TreeFam" id="TF323999"/>
<dbReference type="PRO" id="PR:Q1LXK5"/>
<dbReference type="Proteomes" id="UP000000437">
    <property type="component" value="Alternate scaffold 8"/>
</dbReference>
<dbReference type="Proteomes" id="UP000000437">
    <property type="component" value="Chromosome 8"/>
</dbReference>
<dbReference type="Bgee" id="ENSDARG00000056065">
    <property type="expression patterns" value="Expressed in liver and 12 other cell types or tissues"/>
</dbReference>
<dbReference type="GO" id="GO:0005829">
    <property type="term" value="C:cytosol"/>
    <property type="evidence" value="ECO:0000318"/>
    <property type="project" value="GO_Central"/>
</dbReference>
<dbReference type="GO" id="GO:0043186">
    <property type="term" value="C:P granule"/>
    <property type="evidence" value="ECO:0000318"/>
    <property type="project" value="GO_Central"/>
</dbReference>
<dbReference type="GO" id="GO:0000932">
    <property type="term" value="C:P-body"/>
    <property type="evidence" value="ECO:0000250"/>
    <property type="project" value="UniProtKB"/>
</dbReference>
<dbReference type="GO" id="GO:0032574">
    <property type="term" value="F:5'-3' RNA helicase activity"/>
    <property type="evidence" value="ECO:0007669"/>
    <property type="project" value="InterPro"/>
</dbReference>
<dbReference type="GO" id="GO:0005524">
    <property type="term" value="F:ATP binding"/>
    <property type="evidence" value="ECO:0007669"/>
    <property type="project" value="UniProtKB-KW"/>
</dbReference>
<dbReference type="GO" id="GO:0016887">
    <property type="term" value="F:ATP hydrolysis activity"/>
    <property type="evidence" value="ECO:0007669"/>
    <property type="project" value="RHEA"/>
</dbReference>
<dbReference type="GO" id="GO:0003723">
    <property type="term" value="F:RNA binding"/>
    <property type="evidence" value="ECO:0000318"/>
    <property type="project" value="GO_Central"/>
</dbReference>
<dbReference type="GO" id="GO:0035279">
    <property type="term" value="P:miRNA-mediated gene silencing by mRNA destabilization"/>
    <property type="evidence" value="ECO:0000250"/>
    <property type="project" value="UniProtKB"/>
</dbReference>
<dbReference type="GO" id="GO:0035194">
    <property type="term" value="P:regulatory ncRNA-mediated post-transcriptional gene silencing"/>
    <property type="evidence" value="ECO:0000318"/>
    <property type="project" value="GO_Central"/>
</dbReference>
<dbReference type="CDD" id="cd18038">
    <property type="entry name" value="DEXXQc_Helz-like"/>
    <property type="match status" value="1"/>
</dbReference>
<dbReference type="CDD" id="cd18808">
    <property type="entry name" value="SF1_C_Upf1"/>
    <property type="match status" value="1"/>
</dbReference>
<dbReference type="FunFam" id="3.40.50.300:FF:000608">
    <property type="entry name" value="Mov10 RISC complex RNA helicase"/>
    <property type="match status" value="1"/>
</dbReference>
<dbReference type="FunFam" id="3.40.50.300:FF:001941">
    <property type="entry name" value="Mov10 RISC complex RNA helicase"/>
    <property type="match status" value="1"/>
</dbReference>
<dbReference type="Gene3D" id="3.40.50.300">
    <property type="entry name" value="P-loop containing nucleotide triphosphate hydrolases"/>
    <property type="match status" value="2"/>
</dbReference>
<dbReference type="InterPro" id="IPR041679">
    <property type="entry name" value="DNA2/NAM7-like_C"/>
</dbReference>
<dbReference type="InterPro" id="IPR041677">
    <property type="entry name" value="DNA2/NAM7_AAA_11"/>
</dbReference>
<dbReference type="InterPro" id="IPR049080">
    <property type="entry name" value="MOV-10-like_beta-barrel"/>
</dbReference>
<dbReference type="InterPro" id="IPR026122">
    <property type="entry name" value="MOV-10/SDE3_DEXXQ/H-box"/>
</dbReference>
<dbReference type="InterPro" id="IPR049079">
    <property type="entry name" value="Mov-10_helical"/>
</dbReference>
<dbReference type="InterPro" id="IPR049077">
    <property type="entry name" value="MOV-10_Ig-like"/>
</dbReference>
<dbReference type="InterPro" id="IPR049075">
    <property type="entry name" value="MOV-10_N"/>
</dbReference>
<dbReference type="InterPro" id="IPR027417">
    <property type="entry name" value="P-loop_NTPase"/>
</dbReference>
<dbReference type="InterPro" id="IPR047187">
    <property type="entry name" value="SF1_C_Upf1"/>
</dbReference>
<dbReference type="PANTHER" id="PTHR45418:SF5">
    <property type="entry name" value="BRCA2-INTERACTING PROTEIN-LIKE-RELATED"/>
    <property type="match status" value="1"/>
</dbReference>
<dbReference type="PANTHER" id="PTHR45418">
    <property type="entry name" value="CANCER/TESTIS ANTIGEN 55"/>
    <property type="match status" value="1"/>
</dbReference>
<dbReference type="Pfam" id="PF13086">
    <property type="entry name" value="AAA_11"/>
    <property type="match status" value="2"/>
</dbReference>
<dbReference type="Pfam" id="PF13087">
    <property type="entry name" value="AAA_12"/>
    <property type="match status" value="1"/>
</dbReference>
<dbReference type="Pfam" id="PF21634">
    <property type="entry name" value="MOV-10_beta-barrel"/>
    <property type="match status" value="1"/>
</dbReference>
<dbReference type="Pfam" id="PF21635">
    <property type="entry name" value="Mov-10_helical"/>
    <property type="match status" value="1"/>
</dbReference>
<dbReference type="Pfam" id="PF21633">
    <property type="entry name" value="MOV-10_Ig-like"/>
    <property type="match status" value="1"/>
</dbReference>
<dbReference type="Pfam" id="PF21632">
    <property type="entry name" value="MOV-10_N"/>
    <property type="match status" value="1"/>
</dbReference>
<dbReference type="SUPFAM" id="SSF52540">
    <property type="entry name" value="P-loop containing nucleoside triphosphate hydrolases"/>
    <property type="match status" value="1"/>
</dbReference>
<proteinExistence type="inferred from homology"/>